<name>Y4GM_SINFN</name>
<keyword id="KW-0067">ATP-binding</keyword>
<keyword id="KW-1003">Cell membrane</keyword>
<keyword id="KW-0472">Membrane</keyword>
<keyword id="KW-0547">Nucleotide-binding</keyword>
<keyword id="KW-0614">Plasmid</keyword>
<keyword id="KW-1185">Reference proteome</keyword>
<keyword id="KW-0812">Transmembrane</keyword>
<keyword id="KW-1133">Transmembrane helix</keyword>
<keyword id="KW-0813">Transport</keyword>
<reference key="1">
    <citation type="journal article" date="1997" name="Nature">
        <title>Molecular basis of symbiosis between Rhizobium and legumes.</title>
        <authorList>
            <person name="Freiberg C.A."/>
            <person name="Fellay R."/>
            <person name="Bairoch A."/>
            <person name="Broughton W.J."/>
            <person name="Rosenthal A."/>
            <person name="Perret X."/>
        </authorList>
    </citation>
    <scope>NUCLEOTIDE SEQUENCE [LARGE SCALE GENOMIC DNA]</scope>
    <source>
        <strain>NBRC 101917 / NGR234</strain>
    </source>
</reference>
<reference key="2">
    <citation type="journal article" date="2009" name="Appl. Environ. Microbiol.">
        <title>Rhizobium sp. strain NGR234 possesses a remarkable number of secretion systems.</title>
        <authorList>
            <person name="Schmeisser C."/>
            <person name="Liesegang H."/>
            <person name="Krysciak D."/>
            <person name="Bakkou N."/>
            <person name="Le Quere A."/>
            <person name="Wollherr A."/>
            <person name="Heinemeyer I."/>
            <person name="Morgenstern B."/>
            <person name="Pommerening-Roeser A."/>
            <person name="Flores M."/>
            <person name="Palacios R."/>
            <person name="Brenner S."/>
            <person name="Gottschalk G."/>
            <person name="Schmitz R.A."/>
            <person name="Broughton W.J."/>
            <person name="Perret X."/>
            <person name="Strittmatter A.W."/>
            <person name="Streit W.R."/>
        </authorList>
    </citation>
    <scope>NUCLEOTIDE SEQUENCE [LARGE SCALE GENOMIC DNA]</scope>
    <source>
        <strain>NBRC 101917 / NGR234</strain>
    </source>
</reference>
<feature type="chain" id="PRO_0000093271" description="Uncharacterized ABC transporter ATP-binding protein y4gM">
    <location>
        <begin position="1"/>
        <end position="586"/>
    </location>
</feature>
<feature type="transmembrane region" description="Helical" evidence="2">
    <location>
        <begin position="30"/>
        <end position="50"/>
    </location>
</feature>
<feature type="transmembrane region" description="Helical" evidence="2">
    <location>
        <begin position="66"/>
        <end position="86"/>
    </location>
</feature>
<feature type="transmembrane region" description="Helical" evidence="2">
    <location>
        <begin position="162"/>
        <end position="184"/>
    </location>
</feature>
<feature type="transmembrane region" description="Helical" evidence="2">
    <location>
        <begin position="256"/>
        <end position="276"/>
    </location>
</feature>
<feature type="domain" description="ABC transmembrane type-1" evidence="2">
    <location>
        <begin position="29"/>
        <end position="312"/>
    </location>
</feature>
<feature type="domain" description="ABC transporter" evidence="1">
    <location>
        <begin position="346"/>
        <end position="580"/>
    </location>
</feature>
<feature type="binding site" evidence="1">
    <location>
        <begin position="379"/>
        <end position="386"/>
    </location>
    <ligand>
        <name>ATP</name>
        <dbReference type="ChEBI" id="CHEBI:30616"/>
    </ligand>
</feature>
<organism>
    <name type="scientific">Sinorhizobium fredii (strain NBRC 101917 / NGR234)</name>
    <dbReference type="NCBI Taxonomy" id="394"/>
    <lineage>
        <taxon>Bacteria</taxon>
        <taxon>Pseudomonadati</taxon>
        <taxon>Pseudomonadota</taxon>
        <taxon>Alphaproteobacteria</taxon>
        <taxon>Hyphomicrobiales</taxon>
        <taxon>Rhizobiaceae</taxon>
        <taxon>Sinorhizobium/Ensifer group</taxon>
        <taxon>Sinorhizobium</taxon>
    </lineage>
</organism>
<geneLocation type="plasmid">
    <name>sym pNGR234a</name>
</geneLocation>
<dbReference type="EMBL" id="U00090">
    <property type="protein sequence ID" value="AAB91687.1"/>
    <property type="molecule type" value="Genomic_DNA"/>
</dbReference>
<dbReference type="RefSeq" id="NP_443875.1">
    <property type="nucleotide sequence ID" value="NC_000914.2"/>
</dbReference>
<dbReference type="RefSeq" id="WP_010875365.1">
    <property type="nucleotide sequence ID" value="NC_000914.2"/>
</dbReference>
<dbReference type="SMR" id="P55469"/>
<dbReference type="KEGG" id="rhi:NGR_a03510"/>
<dbReference type="PATRIC" id="fig|394.7.peg.359"/>
<dbReference type="eggNOG" id="COG1132">
    <property type="taxonomic scope" value="Bacteria"/>
</dbReference>
<dbReference type="HOGENOM" id="CLU_000604_84_3_5"/>
<dbReference type="OrthoDB" id="9804259at2"/>
<dbReference type="Proteomes" id="UP000001054">
    <property type="component" value="Plasmid pNGR234a"/>
</dbReference>
<dbReference type="GO" id="GO:0005886">
    <property type="term" value="C:plasma membrane"/>
    <property type="evidence" value="ECO:0007669"/>
    <property type="project" value="UniProtKB-SubCell"/>
</dbReference>
<dbReference type="GO" id="GO:0015421">
    <property type="term" value="F:ABC-type oligopeptide transporter activity"/>
    <property type="evidence" value="ECO:0007669"/>
    <property type="project" value="TreeGrafter"/>
</dbReference>
<dbReference type="GO" id="GO:0005524">
    <property type="term" value="F:ATP binding"/>
    <property type="evidence" value="ECO:0007669"/>
    <property type="project" value="UniProtKB-KW"/>
</dbReference>
<dbReference type="GO" id="GO:0016887">
    <property type="term" value="F:ATP hydrolysis activity"/>
    <property type="evidence" value="ECO:0007669"/>
    <property type="project" value="InterPro"/>
</dbReference>
<dbReference type="CDD" id="cd18552">
    <property type="entry name" value="ABC_6TM_MsbA_like"/>
    <property type="match status" value="1"/>
</dbReference>
<dbReference type="FunFam" id="3.40.50.300:FF:000287">
    <property type="entry name" value="Multidrug ABC transporter ATP-binding protein"/>
    <property type="match status" value="1"/>
</dbReference>
<dbReference type="Gene3D" id="1.20.1560.10">
    <property type="entry name" value="ABC transporter type 1, transmembrane domain"/>
    <property type="match status" value="1"/>
</dbReference>
<dbReference type="Gene3D" id="3.40.50.300">
    <property type="entry name" value="P-loop containing nucleotide triphosphate hydrolases"/>
    <property type="match status" value="1"/>
</dbReference>
<dbReference type="InterPro" id="IPR003593">
    <property type="entry name" value="AAA+_ATPase"/>
</dbReference>
<dbReference type="InterPro" id="IPR011527">
    <property type="entry name" value="ABC1_TM_dom"/>
</dbReference>
<dbReference type="InterPro" id="IPR036640">
    <property type="entry name" value="ABC1_TM_sf"/>
</dbReference>
<dbReference type="InterPro" id="IPR003439">
    <property type="entry name" value="ABC_transporter-like_ATP-bd"/>
</dbReference>
<dbReference type="InterPro" id="IPR017871">
    <property type="entry name" value="ABC_transporter-like_CS"/>
</dbReference>
<dbReference type="InterPro" id="IPR027417">
    <property type="entry name" value="P-loop_NTPase"/>
</dbReference>
<dbReference type="InterPro" id="IPR039421">
    <property type="entry name" value="Type_1_exporter"/>
</dbReference>
<dbReference type="PANTHER" id="PTHR43394:SF1">
    <property type="entry name" value="ATP-BINDING CASSETTE SUB-FAMILY B MEMBER 10, MITOCHONDRIAL"/>
    <property type="match status" value="1"/>
</dbReference>
<dbReference type="PANTHER" id="PTHR43394">
    <property type="entry name" value="ATP-DEPENDENT PERMEASE MDL1, MITOCHONDRIAL"/>
    <property type="match status" value="1"/>
</dbReference>
<dbReference type="Pfam" id="PF00664">
    <property type="entry name" value="ABC_membrane"/>
    <property type="match status" value="1"/>
</dbReference>
<dbReference type="Pfam" id="PF00005">
    <property type="entry name" value="ABC_tran"/>
    <property type="match status" value="1"/>
</dbReference>
<dbReference type="SMART" id="SM00382">
    <property type="entry name" value="AAA"/>
    <property type="match status" value="1"/>
</dbReference>
<dbReference type="SUPFAM" id="SSF90123">
    <property type="entry name" value="ABC transporter transmembrane region"/>
    <property type="match status" value="1"/>
</dbReference>
<dbReference type="SUPFAM" id="SSF52540">
    <property type="entry name" value="P-loop containing nucleoside triphosphate hydrolases"/>
    <property type="match status" value="1"/>
</dbReference>
<dbReference type="PROSITE" id="PS50929">
    <property type="entry name" value="ABC_TM1F"/>
    <property type="match status" value="1"/>
</dbReference>
<dbReference type="PROSITE" id="PS00211">
    <property type="entry name" value="ABC_TRANSPORTER_1"/>
    <property type="match status" value="1"/>
</dbReference>
<dbReference type="PROSITE" id="PS50893">
    <property type="entry name" value="ABC_TRANSPORTER_2"/>
    <property type="match status" value="1"/>
</dbReference>
<proteinExistence type="inferred from homology"/>
<gene>
    <name type="ordered locus">NGR_a03510</name>
    <name type="ORF">y4gM</name>
</gene>
<protein>
    <recommendedName>
        <fullName>Uncharacterized ABC transporter ATP-binding protein y4gM</fullName>
    </recommendedName>
</protein>
<evidence type="ECO:0000255" key="1">
    <source>
        <dbReference type="PROSITE-ProRule" id="PRU00434"/>
    </source>
</evidence>
<evidence type="ECO:0000255" key="2">
    <source>
        <dbReference type="PROSITE-ProRule" id="PRU00441"/>
    </source>
</evidence>
<evidence type="ECO:0000305" key="3"/>
<accession>P55469</accession>
<comment type="subcellular location">
    <subcellularLocation>
        <location evidence="3">Cell membrane</location>
        <topology evidence="2">Multi-pass membrane protein</topology>
    </subcellularLocation>
</comment>
<comment type="similarity">
    <text evidence="3">Belongs to the ABC transporter superfamily.</text>
</comment>
<sequence>MLQKFISKSNQSLLMRLLAENFKHQAPWYGIAIGSMVVVAVMTSASAWIMRDVVNSTVVSKDIEKVFGVAVTVAIIFAVKGLATYVQSIFLSKAGNNIIAHTQRRLFEHVLRQGLSFYSIYPSSELLVRLTNNAQAVRSVIELVVTSFIRDLFSLMGLLAVMVIQQPLLSLVSAAVGPGAILGVRVLTRKVRKIMELEIASIGQIIQSVQETSTGIRIVKAFALEDFMRRRMDKYIGDVERRANSIARLEAASSPIMETLSGFAIAGVIALSGVLVLQQGNTPGELMSFITALLLAYEPAKRLARMRISLESALVGVRMMYQLADHPIELTEKNSAIPLPEGPGEIRFKDVNFSYKNGERLFQNLNVTFPAGKTTALVGPSGAGKSSIINLIMRLYDPDVGSVTVDGHDLKDVTFRSLRDRIGFVGQDTFLFSGTIKYNISLGREGASDEEIIEAAKTANAHDFIMKMPHGYDTEVGENGIKLSGGQKQRITIARAMLRNAEILIFDEATSALDSESEIQIRQALARLTRKRTTIMIAHRLSTVTAADNIVVMEGGQVAEQGPQGRLLSQDGVYRRLYELQLLPSA</sequence>